<protein>
    <recommendedName>
        <fullName evidence="1">3-dehydroquinate synthase</fullName>
        <shortName evidence="1">DHQS</shortName>
        <ecNumber evidence="1">4.2.3.4</ecNumber>
    </recommendedName>
</protein>
<organism>
    <name type="scientific">Tropheryma whipplei (strain Twist)</name>
    <name type="common">Whipple's bacillus</name>
    <dbReference type="NCBI Taxonomy" id="203267"/>
    <lineage>
        <taxon>Bacteria</taxon>
        <taxon>Bacillati</taxon>
        <taxon>Actinomycetota</taxon>
        <taxon>Actinomycetes</taxon>
        <taxon>Micrococcales</taxon>
        <taxon>Tropherymataceae</taxon>
        <taxon>Tropheryma</taxon>
    </lineage>
</organism>
<proteinExistence type="inferred from homology"/>
<comment type="function">
    <text evidence="1">Catalyzes the conversion of 3-deoxy-D-arabino-heptulosonate 7-phosphate (DAHP) to dehydroquinate (DHQ).</text>
</comment>
<comment type="catalytic activity">
    <reaction evidence="1">
        <text>7-phospho-2-dehydro-3-deoxy-D-arabino-heptonate = 3-dehydroquinate + phosphate</text>
        <dbReference type="Rhea" id="RHEA:21968"/>
        <dbReference type="ChEBI" id="CHEBI:32364"/>
        <dbReference type="ChEBI" id="CHEBI:43474"/>
        <dbReference type="ChEBI" id="CHEBI:58394"/>
        <dbReference type="EC" id="4.2.3.4"/>
    </reaction>
</comment>
<comment type="cofactor">
    <cofactor evidence="1">
        <name>NAD(+)</name>
        <dbReference type="ChEBI" id="CHEBI:57540"/>
    </cofactor>
</comment>
<comment type="cofactor">
    <cofactor evidence="1">
        <name>Co(2+)</name>
        <dbReference type="ChEBI" id="CHEBI:48828"/>
    </cofactor>
    <cofactor evidence="1">
        <name>Zn(2+)</name>
        <dbReference type="ChEBI" id="CHEBI:29105"/>
    </cofactor>
    <text evidence="1">Binds 1 divalent metal cation per subunit. Can use either Co(2+) or Zn(2+).</text>
</comment>
<comment type="pathway">
    <text evidence="1">Metabolic intermediate biosynthesis; chorismate biosynthesis; chorismate from D-erythrose 4-phosphate and phosphoenolpyruvate: step 2/7.</text>
</comment>
<comment type="subcellular location">
    <subcellularLocation>
        <location evidence="1">Cytoplasm</location>
    </subcellularLocation>
</comment>
<comment type="similarity">
    <text evidence="1">Belongs to the sugar phosphate cyclases superfamily. Dehydroquinate synthase family.</text>
</comment>
<gene>
    <name evidence="1" type="primary">aroB</name>
    <name type="ordered locus">TWT_370</name>
</gene>
<feature type="chain" id="PRO_0000140803" description="3-dehydroquinate synthase">
    <location>
        <begin position="1"/>
        <end position="380"/>
    </location>
</feature>
<feature type="region of interest" description="Disordered" evidence="2">
    <location>
        <begin position="320"/>
        <end position="343"/>
    </location>
</feature>
<feature type="binding site" evidence="1">
    <location>
        <begin position="100"/>
        <end position="104"/>
    </location>
    <ligand>
        <name>NAD(+)</name>
        <dbReference type="ChEBI" id="CHEBI:57540"/>
    </ligand>
</feature>
<feature type="binding site" evidence="1">
    <location>
        <begin position="124"/>
        <end position="125"/>
    </location>
    <ligand>
        <name>NAD(+)</name>
        <dbReference type="ChEBI" id="CHEBI:57540"/>
    </ligand>
</feature>
<feature type="binding site" evidence="1">
    <location>
        <position position="137"/>
    </location>
    <ligand>
        <name>NAD(+)</name>
        <dbReference type="ChEBI" id="CHEBI:57540"/>
    </ligand>
</feature>
<feature type="binding site" evidence="1">
    <location>
        <position position="146"/>
    </location>
    <ligand>
        <name>NAD(+)</name>
        <dbReference type="ChEBI" id="CHEBI:57540"/>
    </ligand>
</feature>
<feature type="binding site" evidence="1">
    <location>
        <position position="179"/>
    </location>
    <ligand>
        <name>Zn(2+)</name>
        <dbReference type="ChEBI" id="CHEBI:29105"/>
    </ligand>
</feature>
<feature type="binding site" evidence="1">
    <location>
        <position position="251"/>
    </location>
    <ligand>
        <name>Zn(2+)</name>
        <dbReference type="ChEBI" id="CHEBI:29105"/>
    </ligand>
</feature>
<feature type="binding site" evidence="1">
    <location>
        <position position="267"/>
    </location>
    <ligand>
        <name>Zn(2+)</name>
        <dbReference type="ChEBI" id="CHEBI:29105"/>
    </ligand>
</feature>
<name>AROB_TROWT</name>
<accession>Q83GD7</accession>
<evidence type="ECO:0000255" key="1">
    <source>
        <dbReference type="HAMAP-Rule" id="MF_00110"/>
    </source>
</evidence>
<evidence type="ECO:0000256" key="2">
    <source>
        <dbReference type="SAM" id="MobiDB-lite"/>
    </source>
</evidence>
<sequence length="380" mass="42194">MMKKYSLTTHSTETCQILFTSVSNVFKYIPSGTRRILIMYQDSVSQVLPIFSAASGVQCYRYLIPDSESAKQLGVAEQCWRFLAQNNFTRSDLIVSCGGGAASDLSGFVASSYLRGIKVIHIPTTLVGMVDAAIGGKTGINLKEGKNLVGSFYSPYIVLCDPSMLTTLNEEHLKSGLAEIIKCGFIQDESILSILEHNAQDHMDCSQRVCAETLPPKLLEELIHKAVSVKITMVDSDFRDTHKRQFLNYGHTLAHALEAATSHKLPHGQAVSIGMVYAAQVAFAKGLIGRNILTRHERILETYGLPICPPEVQWRNITPYMQRDKKNMQSNDTDSDKDSREMPQISTQSKLVLLREIANPFISSVSHTVLLKAYEAMFPQ</sequence>
<reference key="1">
    <citation type="journal article" date="2003" name="Genome Res.">
        <title>Tropheryma whipplei twist: a human pathogenic Actinobacteria with a reduced genome.</title>
        <authorList>
            <person name="Raoult D."/>
            <person name="Ogata H."/>
            <person name="Audic S."/>
            <person name="Robert C."/>
            <person name="Suhre K."/>
            <person name="Drancourt M."/>
            <person name="Claverie J.-M."/>
        </authorList>
    </citation>
    <scope>NUCLEOTIDE SEQUENCE [LARGE SCALE GENOMIC DNA]</scope>
    <source>
        <strain>Twist</strain>
    </source>
</reference>
<dbReference type="EC" id="4.2.3.4" evidence="1"/>
<dbReference type="EMBL" id="AE014184">
    <property type="protein sequence ID" value="AAO44467.1"/>
    <property type="molecule type" value="Genomic_DNA"/>
</dbReference>
<dbReference type="SMR" id="Q83GD7"/>
<dbReference type="STRING" id="203267.TWT_370"/>
<dbReference type="KEGG" id="twh:TWT_370"/>
<dbReference type="eggNOG" id="COG0337">
    <property type="taxonomic scope" value="Bacteria"/>
</dbReference>
<dbReference type="HOGENOM" id="CLU_001201_0_1_11"/>
<dbReference type="OrthoDB" id="9806583at2"/>
<dbReference type="UniPathway" id="UPA00053">
    <property type="reaction ID" value="UER00085"/>
</dbReference>
<dbReference type="Proteomes" id="UP000002200">
    <property type="component" value="Chromosome"/>
</dbReference>
<dbReference type="GO" id="GO:0005737">
    <property type="term" value="C:cytoplasm"/>
    <property type="evidence" value="ECO:0007669"/>
    <property type="project" value="UniProtKB-SubCell"/>
</dbReference>
<dbReference type="GO" id="GO:0003856">
    <property type="term" value="F:3-dehydroquinate synthase activity"/>
    <property type="evidence" value="ECO:0007669"/>
    <property type="project" value="UniProtKB-UniRule"/>
</dbReference>
<dbReference type="GO" id="GO:0046872">
    <property type="term" value="F:metal ion binding"/>
    <property type="evidence" value="ECO:0007669"/>
    <property type="project" value="UniProtKB-KW"/>
</dbReference>
<dbReference type="GO" id="GO:0000166">
    <property type="term" value="F:nucleotide binding"/>
    <property type="evidence" value="ECO:0007669"/>
    <property type="project" value="UniProtKB-KW"/>
</dbReference>
<dbReference type="GO" id="GO:0008652">
    <property type="term" value="P:amino acid biosynthetic process"/>
    <property type="evidence" value="ECO:0007669"/>
    <property type="project" value="UniProtKB-KW"/>
</dbReference>
<dbReference type="GO" id="GO:0009073">
    <property type="term" value="P:aromatic amino acid family biosynthetic process"/>
    <property type="evidence" value="ECO:0007669"/>
    <property type="project" value="UniProtKB-KW"/>
</dbReference>
<dbReference type="GO" id="GO:0009423">
    <property type="term" value="P:chorismate biosynthetic process"/>
    <property type="evidence" value="ECO:0007669"/>
    <property type="project" value="UniProtKB-UniRule"/>
</dbReference>
<dbReference type="CDD" id="cd08195">
    <property type="entry name" value="DHQS"/>
    <property type="match status" value="1"/>
</dbReference>
<dbReference type="Gene3D" id="3.40.50.1970">
    <property type="match status" value="1"/>
</dbReference>
<dbReference type="Gene3D" id="1.20.1090.10">
    <property type="entry name" value="Dehydroquinate synthase-like - alpha domain"/>
    <property type="match status" value="1"/>
</dbReference>
<dbReference type="HAMAP" id="MF_00110">
    <property type="entry name" value="DHQ_synthase"/>
    <property type="match status" value="1"/>
</dbReference>
<dbReference type="InterPro" id="IPR050071">
    <property type="entry name" value="Dehydroquinate_synthase"/>
</dbReference>
<dbReference type="InterPro" id="IPR016037">
    <property type="entry name" value="DHQ_synth_AroB"/>
</dbReference>
<dbReference type="InterPro" id="IPR030963">
    <property type="entry name" value="DHQ_synth_fam"/>
</dbReference>
<dbReference type="InterPro" id="IPR030960">
    <property type="entry name" value="DHQS/DOIS_N"/>
</dbReference>
<dbReference type="InterPro" id="IPR056179">
    <property type="entry name" value="DHQS_C"/>
</dbReference>
<dbReference type="NCBIfam" id="TIGR01357">
    <property type="entry name" value="aroB"/>
    <property type="match status" value="1"/>
</dbReference>
<dbReference type="PANTHER" id="PTHR43622">
    <property type="entry name" value="3-DEHYDROQUINATE SYNTHASE"/>
    <property type="match status" value="1"/>
</dbReference>
<dbReference type="PANTHER" id="PTHR43622:SF7">
    <property type="entry name" value="3-DEHYDROQUINATE SYNTHASE, CHLOROPLASTIC"/>
    <property type="match status" value="1"/>
</dbReference>
<dbReference type="Pfam" id="PF01761">
    <property type="entry name" value="DHQ_synthase"/>
    <property type="match status" value="1"/>
</dbReference>
<dbReference type="Pfam" id="PF24621">
    <property type="entry name" value="DHQS_C"/>
    <property type="match status" value="1"/>
</dbReference>
<dbReference type="PIRSF" id="PIRSF001455">
    <property type="entry name" value="DHQ_synth"/>
    <property type="match status" value="1"/>
</dbReference>
<dbReference type="SUPFAM" id="SSF56796">
    <property type="entry name" value="Dehydroquinate synthase-like"/>
    <property type="match status" value="1"/>
</dbReference>
<keyword id="KW-0028">Amino-acid biosynthesis</keyword>
<keyword id="KW-0057">Aromatic amino acid biosynthesis</keyword>
<keyword id="KW-0170">Cobalt</keyword>
<keyword id="KW-0963">Cytoplasm</keyword>
<keyword id="KW-0456">Lyase</keyword>
<keyword id="KW-0479">Metal-binding</keyword>
<keyword id="KW-0520">NAD</keyword>
<keyword id="KW-0547">Nucleotide-binding</keyword>
<keyword id="KW-1185">Reference proteome</keyword>
<keyword id="KW-0862">Zinc</keyword>